<proteinExistence type="inferred from homology"/>
<keyword id="KW-0093">Biotin biosynthesis</keyword>
<keyword id="KW-0963">Cytoplasm</keyword>
<keyword id="KW-0378">Hydrolase</keyword>
<keyword id="KW-1185">Reference proteome</keyword>
<keyword id="KW-0719">Serine esterase</keyword>
<name>BIOH_SHEWM</name>
<feature type="chain" id="PRO_1000140004" description="Pimeloyl-[acyl-carrier protein] methyl ester esterase">
    <location>
        <begin position="1"/>
        <end position="256"/>
    </location>
</feature>
<feature type="domain" description="AB hydrolase-1" evidence="1">
    <location>
        <begin position="16"/>
        <end position="240"/>
    </location>
</feature>
<feature type="active site" description="Nucleophile" evidence="2">
    <location>
        <position position="80"/>
    </location>
</feature>
<feature type="active site" evidence="2">
    <location>
        <position position="207"/>
    </location>
</feature>
<feature type="active site" evidence="2">
    <location>
        <position position="235"/>
    </location>
</feature>
<feature type="binding site" evidence="2">
    <location>
        <position position="22"/>
    </location>
    <ligand>
        <name>substrate</name>
    </ligand>
</feature>
<feature type="binding site" evidence="2">
    <location>
        <begin position="80"/>
        <end position="81"/>
    </location>
    <ligand>
        <name>substrate</name>
    </ligand>
</feature>
<feature type="binding site" evidence="2">
    <location>
        <begin position="143"/>
        <end position="147"/>
    </location>
    <ligand>
        <name>substrate</name>
    </ligand>
</feature>
<feature type="binding site" evidence="2">
    <location>
        <position position="235"/>
    </location>
    <ligand>
        <name>substrate</name>
    </ligand>
</feature>
<dbReference type="EC" id="3.1.1.85" evidence="2"/>
<dbReference type="EMBL" id="CP000961">
    <property type="protein sequence ID" value="ACA84457.1"/>
    <property type="molecule type" value="Genomic_DNA"/>
</dbReference>
<dbReference type="RefSeq" id="WP_012322806.1">
    <property type="nucleotide sequence ID" value="NC_010506.1"/>
</dbReference>
<dbReference type="SMR" id="B1KM44"/>
<dbReference type="STRING" id="392500.Swoo_0156"/>
<dbReference type="ESTHER" id="shewm-bioh">
    <property type="family name" value="BioH"/>
</dbReference>
<dbReference type="KEGG" id="swd:Swoo_0156"/>
<dbReference type="eggNOG" id="COG0596">
    <property type="taxonomic scope" value="Bacteria"/>
</dbReference>
<dbReference type="HOGENOM" id="CLU_020336_12_2_6"/>
<dbReference type="UniPathway" id="UPA00078"/>
<dbReference type="Proteomes" id="UP000002168">
    <property type="component" value="Chromosome"/>
</dbReference>
<dbReference type="GO" id="GO:0005737">
    <property type="term" value="C:cytoplasm"/>
    <property type="evidence" value="ECO:0007669"/>
    <property type="project" value="UniProtKB-SubCell"/>
</dbReference>
<dbReference type="GO" id="GO:0016020">
    <property type="term" value="C:membrane"/>
    <property type="evidence" value="ECO:0007669"/>
    <property type="project" value="TreeGrafter"/>
</dbReference>
<dbReference type="GO" id="GO:0090499">
    <property type="term" value="F:pimelyl-[acyl-carrier protein] methyl ester esterase activity"/>
    <property type="evidence" value="ECO:0007669"/>
    <property type="project" value="UniProtKB-EC"/>
</dbReference>
<dbReference type="GO" id="GO:0009102">
    <property type="term" value="P:biotin biosynthetic process"/>
    <property type="evidence" value="ECO:0007669"/>
    <property type="project" value="UniProtKB-UniRule"/>
</dbReference>
<dbReference type="Gene3D" id="3.40.50.1820">
    <property type="entry name" value="alpha/beta hydrolase"/>
    <property type="match status" value="1"/>
</dbReference>
<dbReference type="HAMAP" id="MF_01260">
    <property type="entry name" value="Carboxylester"/>
    <property type="match status" value="1"/>
</dbReference>
<dbReference type="InterPro" id="IPR000073">
    <property type="entry name" value="AB_hydrolase_1"/>
</dbReference>
<dbReference type="InterPro" id="IPR029058">
    <property type="entry name" value="AB_hydrolase_fold"/>
</dbReference>
<dbReference type="InterPro" id="IPR050266">
    <property type="entry name" value="AB_hydrolase_sf"/>
</dbReference>
<dbReference type="InterPro" id="IPR010076">
    <property type="entry name" value="BioH"/>
</dbReference>
<dbReference type="NCBIfam" id="TIGR01738">
    <property type="entry name" value="bioH"/>
    <property type="match status" value="1"/>
</dbReference>
<dbReference type="PANTHER" id="PTHR43798:SF31">
    <property type="entry name" value="AB HYDROLASE SUPERFAMILY PROTEIN YCLE"/>
    <property type="match status" value="1"/>
</dbReference>
<dbReference type="PANTHER" id="PTHR43798">
    <property type="entry name" value="MONOACYLGLYCEROL LIPASE"/>
    <property type="match status" value="1"/>
</dbReference>
<dbReference type="Pfam" id="PF00561">
    <property type="entry name" value="Abhydrolase_1"/>
    <property type="match status" value="1"/>
</dbReference>
<dbReference type="SUPFAM" id="SSF53474">
    <property type="entry name" value="alpha/beta-Hydrolases"/>
    <property type="match status" value="1"/>
</dbReference>
<gene>
    <name evidence="2" type="primary">bioH</name>
    <name type="ordered locus">Swoo_0156</name>
</gene>
<reference key="1">
    <citation type="submission" date="2008-02" db="EMBL/GenBank/DDBJ databases">
        <title>Complete sequence of Shewanella woodyi ATCC 51908.</title>
        <authorList>
            <consortium name="US DOE Joint Genome Institute"/>
            <person name="Copeland A."/>
            <person name="Lucas S."/>
            <person name="Lapidus A."/>
            <person name="Glavina del Rio T."/>
            <person name="Dalin E."/>
            <person name="Tice H."/>
            <person name="Bruce D."/>
            <person name="Goodwin L."/>
            <person name="Pitluck S."/>
            <person name="Sims D."/>
            <person name="Brettin T."/>
            <person name="Detter J.C."/>
            <person name="Han C."/>
            <person name="Kuske C.R."/>
            <person name="Schmutz J."/>
            <person name="Larimer F."/>
            <person name="Land M."/>
            <person name="Hauser L."/>
            <person name="Kyrpides N."/>
            <person name="Lykidis A."/>
            <person name="Zhao J.-S."/>
            <person name="Richardson P."/>
        </authorList>
    </citation>
    <scope>NUCLEOTIDE SEQUENCE [LARGE SCALE GENOMIC DNA]</scope>
    <source>
        <strain>ATCC 51908 / MS32</strain>
    </source>
</reference>
<accession>B1KM44</accession>
<sequence length="256" mass="28558">MSSSLHIESIGQGQELVILHGWGVNSSVFTPLHASLSEYRVHYVDLPGFGHSDPIDGDLDDWVDAIINQLPNTAIWIGWSLGGLVATKAALRYPEQVRGLVTIASSPCFMAREDESWPGIPPQVLSQFSTQLQQNIGKTIERFLAIQVMGSATAKEDIKQLKELVLSRPLPKNSALAQGLKMLENIDLRAQLPQIEQPWLRVWGRLDGLVPRRVPPLMPNHQAHFTDLLLPKASHAPFLSHRDEFLTGLTDWLNKF</sequence>
<comment type="function">
    <text evidence="2">The physiological role of BioH is to remove the methyl group introduced by BioC when the pimeloyl moiety is complete. It allows to synthesize pimeloyl-ACP via the fatty acid synthetic pathway through the hydrolysis of the ester bonds of pimeloyl-ACP esters.</text>
</comment>
<comment type="catalytic activity">
    <reaction evidence="2">
        <text>6-carboxyhexanoyl-[ACP] methyl ester + H2O = 6-carboxyhexanoyl-[ACP] + methanol + H(+)</text>
        <dbReference type="Rhea" id="RHEA:42700"/>
        <dbReference type="Rhea" id="RHEA-COMP:9955"/>
        <dbReference type="Rhea" id="RHEA-COMP:10186"/>
        <dbReference type="ChEBI" id="CHEBI:15377"/>
        <dbReference type="ChEBI" id="CHEBI:15378"/>
        <dbReference type="ChEBI" id="CHEBI:17790"/>
        <dbReference type="ChEBI" id="CHEBI:78846"/>
        <dbReference type="ChEBI" id="CHEBI:82735"/>
        <dbReference type="EC" id="3.1.1.85"/>
    </reaction>
</comment>
<comment type="pathway">
    <text evidence="2">Cofactor biosynthesis; biotin biosynthesis.</text>
</comment>
<comment type="subunit">
    <text evidence="2">Monomer.</text>
</comment>
<comment type="subcellular location">
    <subcellularLocation>
        <location evidence="2">Cytoplasm</location>
    </subcellularLocation>
</comment>
<comment type="similarity">
    <text evidence="2">Belongs to the AB hydrolase superfamily. Carboxylesterase BioH family.</text>
</comment>
<organism>
    <name type="scientific">Shewanella woodyi (strain ATCC 51908 / MS32)</name>
    <dbReference type="NCBI Taxonomy" id="392500"/>
    <lineage>
        <taxon>Bacteria</taxon>
        <taxon>Pseudomonadati</taxon>
        <taxon>Pseudomonadota</taxon>
        <taxon>Gammaproteobacteria</taxon>
        <taxon>Alteromonadales</taxon>
        <taxon>Shewanellaceae</taxon>
        <taxon>Shewanella</taxon>
    </lineage>
</organism>
<protein>
    <recommendedName>
        <fullName evidence="2">Pimeloyl-[acyl-carrier protein] methyl ester esterase</fullName>
        <ecNumber evidence="2">3.1.1.85</ecNumber>
    </recommendedName>
    <alternativeName>
        <fullName evidence="2">Biotin synthesis protein BioH</fullName>
    </alternativeName>
    <alternativeName>
        <fullName evidence="2">Carboxylesterase BioH</fullName>
    </alternativeName>
</protein>
<evidence type="ECO:0000255" key="1"/>
<evidence type="ECO:0000255" key="2">
    <source>
        <dbReference type="HAMAP-Rule" id="MF_01260"/>
    </source>
</evidence>